<reference key="1">
    <citation type="journal article" date="2002" name="Nat. Biotechnol.">
        <title>Genome sequence of the dissimilatory metal ion-reducing bacterium Shewanella oneidensis.</title>
        <authorList>
            <person name="Heidelberg J.F."/>
            <person name="Paulsen I.T."/>
            <person name="Nelson K.E."/>
            <person name="Gaidos E.J."/>
            <person name="Nelson W.C."/>
            <person name="Read T.D."/>
            <person name="Eisen J.A."/>
            <person name="Seshadri R."/>
            <person name="Ward N.L."/>
            <person name="Methe B.A."/>
            <person name="Clayton R.A."/>
            <person name="Meyer T."/>
            <person name="Tsapin A."/>
            <person name="Scott J."/>
            <person name="Beanan M.J."/>
            <person name="Brinkac L.M."/>
            <person name="Daugherty S.C."/>
            <person name="DeBoy R.T."/>
            <person name="Dodson R.J."/>
            <person name="Durkin A.S."/>
            <person name="Haft D.H."/>
            <person name="Kolonay J.F."/>
            <person name="Madupu R."/>
            <person name="Peterson J.D."/>
            <person name="Umayam L.A."/>
            <person name="White O."/>
            <person name="Wolf A.M."/>
            <person name="Vamathevan J.J."/>
            <person name="Weidman J.F."/>
            <person name="Impraim M."/>
            <person name="Lee K."/>
            <person name="Berry K.J."/>
            <person name="Lee C."/>
            <person name="Mueller J."/>
            <person name="Khouri H.M."/>
            <person name="Gill J."/>
            <person name="Utterback T.R."/>
            <person name="McDonald L.A."/>
            <person name="Feldblyum T.V."/>
            <person name="Smith H.O."/>
            <person name="Venter J.C."/>
            <person name="Nealson K.H."/>
            <person name="Fraser C.M."/>
        </authorList>
    </citation>
    <scope>NUCLEOTIDE SEQUENCE [LARGE SCALE GENOMIC DNA]</scope>
    <source>
        <strain>ATCC 700550 / JCM 31522 / CIP 106686 / LMG 19005 / NCIMB 14063 / MR-1</strain>
    </source>
</reference>
<dbReference type="EC" id="2.7.6.1" evidence="1"/>
<dbReference type="EMBL" id="AE014299">
    <property type="protein sequence ID" value="AAN56814.1"/>
    <property type="molecule type" value="Genomic_DNA"/>
</dbReference>
<dbReference type="RefSeq" id="NP_719370.1">
    <property type="nucleotide sequence ID" value="NC_004347.2"/>
</dbReference>
<dbReference type="RefSeq" id="WP_011073601.1">
    <property type="nucleotide sequence ID" value="NZ_CP053946.1"/>
</dbReference>
<dbReference type="SMR" id="Q8EAQ9"/>
<dbReference type="STRING" id="211586.SO_3837"/>
<dbReference type="PaxDb" id="211586-SO_3837"/>
<dbReference type="KEGG" id="son:SO_3837"/>
<dbReference type="PATRIC" id="fig|211586.12.peg.3725"/>
<dbReference type="eggNOG" id="COG0462">
    <property type="taxonomic scope" value="Bacteria"/>
</dbReference>
<dbReference type="HOGENOM" id="CLU_033546_2_0_6"/>
<dbReference type="OrthoDB" id="9777067at2"/>
<dbReference type="PhylomeDB" id="Q8EAQ9"/>
<dbReference type="BioCyc" id="SONE211586:G1GMP-3562-MONOMER"/>
<dbReference type="UniPathway" id="UPA00087">
    <property type="reaction ID" value="UER00172"/>
</dbReference>
<dbReference type="Proteomes" id="UP000008186">
    <property type="component" value="Chromosome"/>
</dbReference>
<dbReference type="GO" id="GO:0005737">
    <property type="term" value="C:cytoplasm"/>
    <property type="evidence" value="ECO:0000318"/>
    <property type="project" value="GO_Central"/>
</dbReference>
<dbReference type="GO" id="GO:0002189">
    <property type="term" value="C:ribose phosphate diphosphokinase complex"/>
    <property type="evidence" value="ECO:0000318"/>
    <property type="project" value="GO_Central"/>
</dbReference>
<dbReference type="GO" id="GO:0005524">
    <property type="term" value="F:ATP binding"/>
    <property type="evidence" value="ECO:0007669"/>
    <property type="project" value="UniProtKB-KW"/>
</dbReference>
<dbReference type="GO" id="GO:0016301">
    <property type="term" value="F:kinase activity"/>
    <property type="evidence" value="ECO:0007669"/>
    <property type="project" value="UniProtKB-KW"/>
</dbReference>
<dbReference type="GO" id="GO:0000287">
    <property type="term" value="F:magnesium ion binding"/>
    <property type="evidence" value="ECO:0007669"/>
    <property type="project" value="UniProtKB-UniRule"/>
</dbReference>
<dbReference type="GO" id="GO:0004749">
    <property type="term" value="F:ribose phosphate diphosphokinase activity"/>
    <property type="evidence" value="ECO:0000318"/>
    <property type="project" value="GO_Central"/>
</dbReference>
<dbReference type="GO" id="GO:0006015">
    <property type="term" value="P:5-phosphoribose 1-diphosphate biosynthetic process"/>
    <property type="evidence" value="ECO:0000318"/>
    <property type="project" value="GO_Central"/>
</dbReference>
<dbReference type="GO" id="GO:0006164">
    <property type="term" value="P:purine nucleotide biosynthetic process"/>
    <property type="evidence" value="ECO:0000318"/>
    <property type="project" value="GO_Central"/>
</dbReference>
<dbReference type="GO" id="GO:0009156">
    <property type="term" value="P:ribonucleoside monophosphate biosynthetic process"/>
    <property type="evidence" value="ECO:0007669"/>
    <property type="project" value="InterPro"/>
</dbReference>
<dbReference type="CDD" id="cd06223">
    <property type="entry name" value="PRTases_typeI"/>
    <property type="match status" value="1"/>
</dbReference>
<dbReference type="FunFam" id="3.40.50.2020:FF:000001">
    <property type="entry name" value="Ribose-phosphate pyrophosphokinase"/>
    <property type="match status" value="1"/>
</dbReference>
<dbReference type="Gene3D" id="3.40.50.2020">
    <property type="match status" value="2"/>
</dbReference>
<dbReference type="HAMAP" id="MF_00583_B">
    <property type="entry name" value="RibP_PPkinase_B"/>
    <property type="match status" value="1"/>
</dbReference>
<dbReference type="InterPro" id="IPR000842">
    <property type="entry name" value="PRib_PP_synth_CS"/>
</dbReference>
<dbReference type="InterPro" id="IPR029099">
    <property type="entry name" value="Pribosyltran_N"/>
</dbReference>
<dbReference type="InterPro" id="IPR000836">
    <property type="entry name" value="PRibTrfase_dom"/>
</dbReference>
<dbReference type="InterPro" id="IPR029057">
    <property type="entry name" value="PRTase-like"/>
</dbReference>
<dbReference type="InterPro" id="IPR005946">
    <property type="entry name" value="Rib-P_diPkinase"/>
</dbReference>
<dbReference type="InterPro" id="IPR037515">
    <property type="entry name" value="Rib-P_diPkinase_bac"/>
</dbReference>
<dbReference type="NCBIfam" id="NF002320">
    <property type="entry name" value="PRK01259.1"/>
    <property type="match status" value="1"/>
</dbReference>
<dbReference type="NCBIfam" id="TIGR01251">
    <property type="entry name" value="ribP_PPkin"/>
    <property type="match status" value="1"/>
</dbReference>
<dbReference type="PANTHER" id="PTHR10210">
    <property type="entry name" value="RIBOSE-PHOSPHATE DIPHOSPHOKINASE FAMILY MEMBER"/>
    <property type="match status" value="1"/>
</dbReference>
<dbReference type="PANTHER" id="PTHR10210:SF41">
    <property type="entry name" value="RIBOSE-PHOSPHATE PYROPHOSPHOKINASE 1, CHLOROPLASTIC"/>
    <property type="match status" value="1"/>
</dbReference>
<dbReference type="Pfam" id="PF14572">
    <property type="entry name" value="Pribosyl_synth"/>
    <property type="match status" value="1"/>
</dbReference>
<dbReference type="Pfam" id="PF13793">
    <property type="entry name" value="Pribosyltran_N"/>
    <property type="match status" value="1"/>
</dbReference>
<dbReference type="SMART" id="SM01400">
    <property type="entry name" value="Pribosyltran_N"/>
    <property type="match status" value="1"/>
</dbReference>
<dbReference type="SUPFAM" id="SSF53271">
    <property type="entry name" value="PRTase-like"/>
    <property type="match status" value="1"/>
</dbReference>
<dbReference type="PROSITE" id="PS00114">
    <property type="entry name" value="PRPP_SYNTHASE"/>
    <property type="match status" value="1"/>
</dbReference>
<gene>
    <name evidence="1" type="primary">prs</name>
    <name type="synonym">prsA</name>
    <name type="ordered locus">SO_3837</name>
</gene>
<name>KPRS_SHEON</name>
<comment type="function">
    <text evidence="1">Involved in the biosynthesis of the central metabolite phospho-alpha-D-ribosyl-1-pyrophosphate (PRPP) via the transfer of pyrophosphoryl group from ATP to 1-hydroxyl of ribose-5-phosphate (Rib-5-P).</text>
</comment>
<comment type="catalytic activity">
    <reaction evidence="1">
        <text>D-ribose 5-phosphate + ATP = 5-phospho-alpha-D-ribose 1-diphosphate + AMP + H(+)</text>
        <dbReference type="Rhea" id="RHEA:15609"/>
        <dbReference type="ChEBI" id="CHEBI:15378"/>
        <dbReference type="ChEBI" id="CHEBI:30616"/>
        <dbReference type="ChEBI" id="CHEBI:58017"/>
        <dbReference type="ChEBI" id="CHEBI:78346"/>
        <dbReference type="ChEBI" id="CHEBI:456215"/>
        <dbReference type="EC" id="2.7.6.1"/>
    </reaction>
</comment>
<comment type="cofactor">
    <cofactor evidence="1">
        <name>Mg(2+)</name>
        <dbReference type="ChEBI" id="CHEBI:18420"/>
    </cofactor>
    <text evidence="1">Binds 2 Mg(2+) ions per subunit.</text>
</comment>
<comment type="pathway">
    <text evidence="1">Metabolic intermediate biosynthesis; 5-phospho-alpha-D-ribose 1-diphosphate biosynthesis; 5-phospho-alpha-D-ribose 1-diphosphate from D-ribose 5-phosphate (route I): step 1/1.</text>
</comment>
<comment type="subunit">
    <text evidence="1">Homohexamer.</text>
</comment>
<comment type="subcellular location">
    <subcellularLocation>
        <location evidence="1">Cytoplasm</location>
    </subcellularLocation>
</comment>
<comment type="similarity">
    <text evidence="1">Belongs to the ribose-phosphate pyrophosphokinase family. Class I subfamily.</text>
</comment>
<keyword id="KW-0067">ATP-binding</keyword>
<keyword id="KW-0963">Cytoplasm</keyword>
<keyword id="KW-0418">Kinase</keyword>
<keyword id="KW-0460">Magnesium</keyword>
<keyword id="KW-0479">Metal-binding</keyword>
<keyword id="KW-0545">Nucleotide biosynthesis</keyword>
<keyword id="KW-0547">Nucleotide-binding</keyword>
<keyword id="KW-1185">Reference proteome</keyword>
<keyword id="KW-0808">Transferase</keyword>
<proteinExistence type="inferred from homology"/>
<organism>
    <name type="scientific">Shewanella oneidensis (strain ATCC 700550 / JCM 31522 / CIP 106686 / LMG 19005 / NCIMB 14063 / MR-1)</name>
    <dbReference type="NCBI Taxonomy" id="211586"/>
    <lineage>
        <taxon>Bacteria</taxon>
        <taxon>Pseudomonadati</taxon>
        <taxon>Pseudomonadota</taxon>
        <taxon>Gammaproteobacteria</taxon>
        <taxon>Alteromonadales</taxon>
        <taxon>Shewanellaceae</taxon>
        <taxon>Shewanella</taxon>
    </lineage>
</organism>
<protein>
    <recommendedName>
        <fullName evidence="1">Ribose-phosphate pyrophosphokinase</fullName>
        <shortName evidence="1">RPPK</shortName>
        <ecNumber evidence="1">2.7.6.1</ecNumber>
    </recommendedName>
    <alternativeName>
        <fullName evidence="1">5-phospho-D-ribosyl alpha-1-diphosphate synthase</fullName>
    </alternativeName>
    <alternativeName>
        <fullName evidence="1">Phosphoribosyl diphosphate synthase</fullName>
    </alternativeName>
    <alternativeName>
        <fullName evidence="1">Phosphoribosyl pyrophosphate synthase</fullName>
        <shortName evidence="1">P-Rib-PP synthase</shortName>
        <shortName evidence="1">PRPP synthase</shortName>
        <shortName evidence="1">PRPPase</shortName>
    </alternativeName>
</protein>
<accession>Q8EAQ9</accession>
<feature type="chain" id="PRO_0000141185" description="Ribose-phosphate pyrophosphokinase">
    <location>
        <begin position="1"/>
        <end position="315"/>
    </location>
</feature>
<feature type="active site" evidence="1">
    <location>
        <position position="194"/>
    </location>
</feature>
<feature type="binding site" evidence="1">
    <location>
        <begin position="37"/>
        <end position="39"/>
    </location>
    <ligand>
        <name>ATP</name>
        <dbReference type="ChEBI" id="CHEBI:30616"/>
    </ligand>
</feature>
<feature type="binding site" evidence="1">
    <location>
        <begin position="96"/>
        <end position="97"/>
    </location>
    <ligand>
        <name>ATP</name>
        <dbReference type="ChEBI" id="CHEBI:30616"/>
    </ligand>
</feature>
<feature type="binding site" evidence="1">
    <location>
        <position position="131"/>
    </location>
    <ligand>
        <name>Mg(2+)</name>
        <dbReference type="ChEBI" id="CHEBI:18420"/>
        <label>1</label>
    </ligand>
</feature>
<feature type="binding site" evidence="1">
    <location>
        <position position="170"/>
    </location>
    <ligand>
        <name>Mg(2+)</name>
        <dbReference type="ChEBI" id="CHEBI:18420"/>
        <label>2</label>
    </ligand>
</feature>
<feature type="binding site" evidence="1">
    <location>
        <position position="196"/>
    </location>
    <ligand>
        <name>D-ribose 5-phosphate</name>
        <dbReference type="ChEBI" id="CHEBI:78346"/>
    </ligand>
</feature>
<feature type="binding site" evidence="1">
    <location>
        <position position="220"/>
    </location>
    <ligand>
        <name>D-ribose 5-phosphate</name>
        <dbReference type="ChEBI" id="CHEBI:78346"/>
    </ligand>
</feature>
<feature type="binding site" evidence="1">
    <location>
        <begin position="224"/>
        <end position="228"/>
    </location>
    <ligand>
        <name>D-ribose 5-phosphate</name>
        <dbReference type="ChEBI" id="CHEBI:78346"/>
    </ligand>
</feature>
<sequence length="315" mass="33985">MPDIKLFAGNATPSLAKKIADRLFCKLGDAVVGRFSDGEISVQINENVRGADVFIIQSTCAPTNDNLMELIVMVDALRRASAGRITAVIPYFGYARQDRRVRSARVPITAKVVADFLSSVGVDRVLTCDLHAEQIQGFFDVPVDNVFGSPVLLEDMLAKKLDNPVVVSPDIGGVVRARAVAKLLDDSDLAIIDKRRPQANVAQVMHIIGDVQGRDCIIVDDMIDTGGTLCKAAEALKEHGANRVFAYATHPVFSGKAAENITNSVIDEVIVTDTVPLSPEMLKVAKVTQLTMSAVLAEAIRRVSNEESISAMFSH</sequence>
<evidence type="ECO:0000255" key="1">
    <source>
        <dbReference type="HAMAP-Rule" id="MF_00583"/>
    </source>
</evidence>